<organism>
    <name type="scientific">Jannaschia sp. (strain CCS1)</name>
    <dbReference type="NCBI Taxonomy" id="290400"/>
    <lineage>
        <taxon>Bacteria</taxon>
        <taxon>Pseudomonadati</taxon>
        <taxon>Pseudomonadota</taxon>
        <taxon>Alphaproteobacteria</taxon>
        <taxon>Rhodobacterales</taxon>
        <taxon>Roseobacteraceae</taxon>
        <taxon>Jannaschia</taxon>
    </lineage>
</organism>
<name>RS21_JANSC</name>
<dbReference type="EMBL" id="CP000264">
    <property type="protein sequence ID" value="ABD56808.1"/>
    <property type="molecule type" value="Genomic_DNA"/>
</dbReference>
<dbReference type="RefSeq" id="WP_011457005.1">
    <property type="nucleotide sequence ID" value="NC_007802.1"/>
</dbReference>
<dbReference type="SMR" id="Q28KF4"/>
<dbReference type="STRING" id="290400.Jann_3891"/>
<dbReference type="KEGG" id="jan:Jann_3891"/>
<dbReference type="eggNOG" id="COG0828">
    <property type="taxonomic scope" value="Bacteria"/>
</dbReference>
<dbReference type="HOGENOM" id="CLU_159258_0_1_5"/>
<dbReference type="OrthoDB" id="9811907at2"/>
<dbReference type="Proteomes" id="UP000008326">
    <property type="component" value="Chromosome"/>
</dbReference>
<dbReference type="GO" id="GO:1990904">
    <property type="term" value="C:ribonucleoprotein complex"/>
    <property type="evidence" value="ECO:0007669"/>
    <property type="project" value="UniProtKB-KW"/>
</dbReference>
<dbReference type="GO" id="GO:0005840">
    <property type="term" value="C:ribosome"/>
    <property type="evidence" value="ECO:0007669"/>
    <property type="project" value="UniProtKB-KW"/>
</dbReference>
<dbReference type="GO" id="GO:0003735">
    <property type="term" value="F:structural constituent of ribosome"/>
    <property type="evidence" value="ECO:0007669"/>
    <property type="project" value="InterPro"/>
</dbReference>
<dbReference type="GO" id="GO:0006412">
    <property type="term" value="P:translation"/>
    <property type="evidence" value="ECO:0007669"/>
    <property type="project" value="UniProtKB-UniRule"/>
</dbReference>
<dbReference type="Gene3D" id="1.20.5.1150">
    <property type="entry name" value="Ribosomal protein S8"/>
    <property type="match status" value="1"/>
</dbReference>
<dbReference type="HAMAP" id="MF_00358">
    <property type="entry name" value="Ribosomal_bS21"/>
    <property type="match status" value="1"/>
</dbReference>
<dbReference type="InterPro" id="IPR001911">
    <property type="entry name" value="Ribosomal_bS21"/>
</dbReference>
<dbReference type="InterPro" id="IPR018278">
    <property type="entry name" value="Ribosomal_bS21_CS"/>
</dbReference>
<dbReference type="InterPro" id="IPR038380">
    <property type="entry name" value="Ribosomal_bS21_sf"/>
</dbReference>
<dbReference type="NCBIfam" id="TIGR00030">
    <property type="entry name" value="S21p"/>
    <property type="match status" value="1"/>
</dbReference>
<dbReference type="PANTHER" id="PTHR21109">
    <property type="entry name" value="MITOCHONDRIAL 28S RIBOSOMAL PROTEIN S21"/>
    <property type="match status" value="1"/>
</dbReference>
<dbReference type="PANTHER" id="PTHR21109:SF0">
    <property type="entry name" value="SMALL RIBOSOMAL SUBUNIT PROTEIN BS21M"/>
    <property type="match status" value="1"/>
</dbReference>
<dbReference type="Pfam" id="PF01165">
    <property type="entry name" value="Ribosomal_S21"/>
    <property type="match status" value="1"/>
</dbReference>
<dbReference type="PROSITE" id="PS01181">
    <property type="entry name" value="RIBOSOMAL_S21"/>
    <property type="match status" value="1"/>
</dbReference>
<evidence type="ECO:0000255" key="1">
    <source>
        <dbReference type="HAMAP-Rule" id="MF_00358"/>
    </source>
</evidence>
<evidence type="ECO:0000305" key="2"/>
<sequence>MQVSVRDNNVDQALRALKKKLQREGVFREMKLKQHYEKPSEKRAREKAEAIRRARKLARKKLQREGML</sequence>
<comment type="similarity">
    <text evidence="1">Belongs to the bacterial ribosomal protein bS21 family.</text>
</comment>
<accession>Q28KF4</accession>
<reference key="1">
    <citation type="submission" date="2006-02" db="EMBL/GenBank/DDBJ databases">
        <title>Complete sequence of chromosome of Jannaschia sp. CCS1.</title>
        <authorList>
            <consortium name="US DOE Joint Genome Institute"/>
            <person name="Copeland A."/>
            <person name="Lucas S."/>
            <person name="Lapidus A."/>
            <person name="Barry K."/>
            <person name="Detter J.C."/>
            <person name="Glavina del Rio T."/>
            <person name="Hammon N."/>
            <person name="Israni S."/>
            <person name="Pitluck S."/>
            <person name="Brettin T."/>
            <person name="Bruce D."/>
            <person name="Han C."/>
            <person name="Tapia R."/>
            <person name="Gilna P."/>
            <person name="Chertkov O."/>
            <person name="Saunders E."/>
            <person name="Schmutz J."/>
            <person name="Larimer F."/>
            <person name="Land M."/>
            <person name="Kyrpides N."/>
            <person name="Lykidis A."/>
            <person name="Moran M.A."/>
            <person name="Belas R."/>
            <person name="Ye W."/>
            <person name="Buchan A."/>
            <person name="Gonzalez J.M."/>
            <person name="Schell M.A."/>
            <person name="Richardson P."/>
        </authorList>
    </citation>
    <scope>NUCLEOTIDE SEQUENCE [LARGE SCALE GENOMIC DNA]</scope>
    <source>
        <strain>CCS1</strain>
    </source>
</reference>
<feature type="chain" id="PRO_0000266692" description="Small ribosomal subunit protein bS21">
    <location>
        <begin position="1"/>
        <end position="68"/>
    </location>
</feature>
<proteinExistence type="inferred from homology"/>
<keyword id="KW-1185">Reference proteome</keyword>
<keyword id="KW-0687">Ribonucleoprotein</keyword>
<keyword id="KW-0689">Ribosomal protein</keyword>
<gene>
    <name evidence="1" type="primary">rpsU</name>
    <name type="ordered locus">Jann_3891</name>
</gene>
<protein>
    <recommendedName>
        <fullName evidence="1">Small ribosomal subunit protein bS21</fullName>
    </recommendedName>
    <alternativeName>
        <fullName evidence="2">30S ribosomal protein S21</fullName>
    </alternativeName>
</protein>